<evidence type="ECO:0000255" key="1">
    <source>
        <dbReference type="HAMAP-Rule" id="MF_01864"/>
    </source>
</evidence>
<evidence type="ECO:0000255" key="2">
    <source>
        <dbReference type="PROSITE-ProRule" id="PRU01266"/>
    </source>
</evidence>
<evidence type="ECO:0000305" key="3"/>
<reference key="1">
    <citation type="journal article" date="2009" name="BMC Genomics">
        <title>Complete genome sequence of the sugarcane nitrogen-fixing endophyte Gluconacetobacter diazotrophicus Pal5.</title>
        <authorList>
            <person name="Bertalan M."/>
            <person name="Albano R."/>
            <person name="de Padua V."/>
            <person name="Rouws L."/>
            <person name="Rojas C."/>
            <person name="Hemerly A."/>
            <person name="Teixeira K."/>
            <person name="Schwab S."/>
            <person name="Araujo J."/>
            <person name="Oliveira A."/>
            <person name="Franca L."/>
            <person name="Magalhaes V."/>
            <person name="Alqueres S."/>
            <person name="Cardoso A."/>
            <person name="Almeida W."/>
            <person name="Loureiro M.M."/>
            <person name="Nogueira E."/>
            <person name="Cidade D."/>
            <person name="Oliveira D."/>
            <person name="Simao T."/>
            <person name="Macedo J."/>
            <person name="Valadao A."/>
            <person name="Dreschsel M."/>
            <person name="Freitas F."/>
            <person name="Vidal M."/>
            <person name="Guedes H."/>
            <person name="Rodrigues E."/>
            <person name="Meneses C."/>
            <person name="Brioso P."/>
            <person name="Pozzer L."/>
            <person name="Figueiredo D."/>
            <person name="Montano H."/>
            <person name="Junior J."/>
            <person name="de Souza Filho G."/>
            <person name="Martin Quintana Flores V."/>
            <person name="Ferreira B."/>
            <person name="Branco A."/>
            <person name="Gonzalez P."/>
            <person name="Guillobel H."/>
            <person name="Lemos M."/>
            <person name="Seibel L."/>
            <person name="Macedo J."/>
            <person name="Alves-Ferreira M."/>
            <person name="Sachetto-Martins G."/>
            <person name="Coelho A."/>
            <person name="Santos E."/>
            <person name="Amaral G."/>
            <person name="Neves A."/>
            <person name="Pacheco A.B."/>
            <person name="Carvalho D."/>
            <person name="Lery L."/>
            <person name="Bisch P."/>
            <person name="Rossle S.C."/>
            <person name="Urmenyi T."/>
            <person name="Rael Pereira A."/>
            <person name="Silva R."/>
            <person name="Rondinelli E."/>
            <person name="von Kruger W."/>
            <person name="Martins O."/>
            <person name="Baldani J.I."/>
            <person name="Ferreira P.C."/>
        </authorList>
    </citation>
    <scope>NUCLEOTIDE SEQUENCE [LARGE SCALE GENOMIC DNA]</scope>
    <source>
        <strain>ATCC 49037 / DSM 5601 / CCUG 37298 / CIP 103539 / LMG 7603 / PAl5</strain>
    </source>
</reference>
<reference key="2">
    <citation type="journal article" date="2010" name="Stand. Genomic Sci.">
        <title>Two genome sequences of the same bacterial strain, Gluconacetobacter diazotrophicus PAl 5, suggest a new standard in genome sequence submission.</title>
        <authorList>
            <person name="Giongo A."/>
            <person name="Tyler H.L."/>
            <person name="Zipperer U.N."/>
            <person name="Triplett E.W."/>
        </authorList>
    </citation>
    <scope>NUCLEOTIDE SEQUENCE [LARGE SCALE GENOMIC DNA]</scope>
    <source>
        <strain>ATCC 49037 / DSM 5601 / CCUG 37298 / CIP 103539 / LMG 7603 / PAl5</strain>
    </source>
</reference>
<dbReference type="EC" id="2.8.4.3" evidence="1"/>
<dbReference type="EMBL" id="AM889285">
    <property type="protein sequence ID" value="CAP55786.1"/>
    <property type="molecule type" value="Genomic_DNA"/>
</dbReference>
<dbReference type="EMBL" id="CP001189">
    <property type="protein sequence ID" value="ACI49872.1"/>
    <property type="status" value="ALT_INIT"/>
    <property type="molecule type" value="Genomic_DNA"/>
</dbReference>
<dbReference type="SMR" id="A9HIM2"/>
<dbReference type="STRING" id="272568.GDI1843"/>
<dbReference type="KEGG" id="gdi:GDI1843"/>
<dbReference type="KEGG" id="gdj:Gdia_0070"/>
<dbReference type="eggNOG" id="COG0621">
    <property type="taxonomic scope" value="Bacteria"/>
</dbReference>
<dbReference type="HOGENOM" id="CLU_018697_2_0_5"/>
<dbReference type="Proteomes" id="UP000001176">
    <property type="component" value="Chromosome"/>
</dbReference>
<dbReference type="GO" id="GO:0005829">
    <property type="term" value="C:cytosol"/>
    <property type="evidence" value="ECO:0007669"/>
    <property type="project" value="TreeGrafter"/>
</dbReference>
<dbReference type="GO" id="GO:0051539">
    <property type="term" value="F:4 iron, 4 sulfur cluster binding"/>
    <property type="evidence" value="ECO:0007669"/>
    <property type="project" value="UniProtKB-UniRule"/>
</dbReference>
<dbReference type="GO" id="GO:0046872">
    <property type="term" value="F:metal ion binding"/>
    <property type="evidence" value="ECO:0007669"/>
    <property type="project" value="UniProtKB-KW"/>
</dbReference>
<dbReference type="GO" id="GO:0035597">
    <property type="term" value="F:N6-isopentenyladenosine methylthiotransferase activity"/>
    <property type="evidence" value="ECO:0007669"/>
    <property type="project" value="TreeGrafter"/>
</dbReference>
<dbReference type="CDD" id="cd01335">
    <property type="entry name" value="Radical_SAM"/>
    <property type="match status" value="1"/>
</dbReference>
<dbReference type="FunFam" id="3.40.50.12160:FF:000003">
    <property type="entry name" value="CDK5 regulatory subunit-associated protein 1"/>
    <property type="match status" value="1"/>
</dbReference>
<dbReference type="FunFam" id="3.80.30.20:FF:000001">
    <property type="entry name" value="tRNA-2-methylthio-N(6)-dimethylallyladenosine synthase 2"/>
    <property type="match status" value="1"/>
</dbReference>
<dbReference type="Gene3D" id="3.40.50.12160">
    <property type="entry name" value="Methylthiotransferase, N-terminal domain"/>
    <property type="match status" value="1"/>
</dbReference>
<dbReference type="Gene3D" id="3.80.30.20">
    <property type="entry name" value="tm_1862 like domain"/>
    <property type="match status" value="1"/>
</dbReference>
<dbReference type="HAMAP" id="MF_01864">
    <property type="entry name" value="tRNA_metthiotr_MiaB"/>
    <property type="match status" value="1"/>
</dbReference>
<dbReference type="InterPro" id="IPR006638">
    <property type="entry name" value="Elp3/MiaA/NifB-like_rSAM"/>
</dbReference>
<dbReference type="InterPro" id="IPR005839">
    <property type="entry name" value="Methylthiotransferase"/>
</dbReference>
<dbReference type="InterPro" id="IPR020612">
    <property type="entry name" value="Methylthiotransferase_CS"/>
</dbReference>
<dbReference type="InterPro" id="IPR013848">
    <property type="entry name" value="Methylthiotransferase_N"/>
</dbReference>
<dbReference type="InterPro" id="IPR038135">
    <property type="entry name" value="Methylthiotransferase_N_sf"/>
</dbReference>
<dbReference type="InterPro" id="IPR006463">
    <property type="entry name" value="MiaB_methiolase"/>
</dbReference>
<dbReference type="InterPro" id="IPR007197">
    <property type="entry name" value="rSAM"/>
</dbReference>
<dbReference type="InterPro" id="IPR023404">
    <property type="entry name" value="rSAM_horseshoe"/>
</dbReference>
<dbReference type="InterPro" id="IPR002792">
    <property type="entry name" value="TRAM_dom"/>
</dbReference>
<dbReference type="NCBIfam" id="TIGR01574">
    <property type="entry name" value="miaB-methiolase"/>
    <property type="match status" value="1"/>
</dbReference>
<dbReference type="NCBIfam" id="TIGR00089">
    <property type="entry name" value="MiaB/RimO family radical SAM methylthiotransferase"/>
    <property type="match status" value="1"/>
</dbReference>
<dbReference type="PANTHER" id="PTHR43020">
    <property type="entry name" value="CDK5 REGULATORY SUBUNIT-ASSOCIATED PROTEIN 1"/>
    <property type="match status" value="1"/>
</dbReference>
<dbReference type="PANTHER" id="PTHR43020:SF2">
    <property type="entry name" value="MITOCHONDRIAL TRNA METHYLTHIOTRANSFERASE CDK5RAP1"/>
    <property type="match status" value="1"/>
</dbReference>
<dbReference type="Pfam" id="PF04055">
    <property type="entry name" value="Radical_SAM"/>
    <property type="match status" value="1"/>
</dbReference>
<dbReference type="Pfam" id="PF01938">
    <property type="entry name" value="TRAM"/>
    <property type="match status" value="1"/>
</dbReference>
<dbReference type="Pfam" id="PF00919">
    <property type="entry name" value="UPF0004"/>
    <property type="match status" value="1"/>
</dbReference>
<dbReference type="SFLD" id="SFLDF00273">
    <property type="entry name" value="(dimethylallyl)adenosine_tRNA"/>
    <property type="match status" value="1"/>
</dbReference>
<dbReference type="SFLD" id="SFLDG01082">
    <property type="entry name" value="B12-binding_domain_containing"/>
    <property type="match status" value="1"/>
</dbReference>
<dbReference type="SFLD" id="SFLDG01061">
    <property type="entry name" value="methylthiotransferase"/>
    <property type="match status" value="1"/>
</dbReference>
<dbReference type="SMART" id="SM00729">
    <property type="entry name" value="Elp3"/>
    <property type="match status" value="1"/>
</dbReference>
<dbReference type="SUPFAM" id="SSF102114">
    <property type="entry name" value="Radical SAM enzymes"/>
    <property type="match status" value="1"/>
</dbReference>
<dbReference type="PROSITE" id="PS51449">
    <property type="entry name" value="MTTASE_N"/>
    <property type="match status" value="1"/>
</dbReference>
<dbReference type="PROSITE" id="PS01278">
    <property type="entry name" value="MTTASE_RADICAL"/>
    <property type="match status" value="1"/>
</dbReference>
<dbReference type="PROSITE" id="PS51918">
    <property type="entry name" value="RADICAL_SAM"/>
    <property type="match status" value="1"/>
</dbReference>
<dbReference type="PROSITE" id="PS50926">
    <property type="entry name" value="TRAM"/>
    <property type="match status" value="1"/>
</dbReference>
<accession>A9HIM2</accession>
<accession>B5ZJ94</accession>
<keyword id="KW-0004">4Fe-4S</keyword>
<keyword id="KW-0963">Cytoplasm</keyword>
<keyword id="KW-0408">Iron</keyword>
<keyword id="KW-0411">Iron-sulfur</keyword>
<keyword id="KW-0479">Metal-binding</keyword>
<keyword id="KW-1185">Reference proteome</keyword>
<keyword id="KW-0949">S-adenosyl-L-methionine</keyword>
<keyword id="KW-0808">Transferase</keyword>
<keyword id="KW-0819">tRNA processing</keyword>
<comment type="function">
    <text evidence="1">Catalyzes the methylthiolation of N6-(dimethylallyl)adenosine (i(6)A), leading to the formation of 2-methylthio-N6-(dimethylallyl)adenosine (ms(2)i(6)A) at position 37 in tRNAs that read codons beginning with uridine.</text>
</comment>
<comment type="catalytic activity">
    <reaction evidence="1">
        <text>N(6)-dimethylallyladenosine(37) in tRNA + (sulfur carrier)-SH + AH2 + 2 S-adenosyl-L-methionine = 2-methylsulfanyl-N(6)-dimethylallyladenosine(37) in tRNA + (sulfur carrier)-H + 5'-deoxyadenosine + L-methionine + A + S-adenosyl-L-homocysteine + 2 H(+)</text>
        <dbReference type="Rhea" id="RHEA:37067"/>
        <dbReference type="Rhea" id="RHEA-COMP:10375"/>
        <dbReference type="Rhea" id="RHEA-COMP:10376"/>
        <dbReference type="Rhea" id="RHEA-COMP:14737"/>
        <dbReference type="Rhea" id="RHEA-COMP:14739"/>
        <dbReference type="ChEBI" id="CHEBI:13193"/>
        <dbReference type="ChEBI" id="CHEBI:15378"/>
        <dbReference type="ChEBI" id="CHEBI:17319"/>
        <dbReference type="ChEBI" id="CHEBI:17499"/>
        <dbReference type="ChEBI" id="CHEBI:29917"/>
        <dbReference type="ChEBI" id="CHEBI:57844"/>
        <dbReference type="ChEBI" id="CHEBI:57856"/>
        <dbReference type="ChEBI" id="CHEBI:59789"/>
        <dbReference type="ChEBI" id="CHEBI:64428"/>
        <dbReference type="ChEBI" id="CHEBI:74415"/>
        <dbReference type="ChEBI" id="CHEBI:74417"/>
        <dbReference type="EC" id="2.8.4.3"/>
    </reaction>
</comment>
<comment type="cofactor">
    <cofactor evidence="1">
        <name>[4Fe-4S] cluster</name>
        <dbReference type="ChEBI" id="CHEBI:49883"/>
    </cofactor>
    <text evidence="1">Binds 2 [4Fe-4S] clusters. One cluster is coordinated with 3 cysteines and an exchangeable S-adenosyl-L-methionine.</text>
</comment>
<comment type="subunit">
    <text evidence="1">Monomer.</text>
</comment>
<comment type="subcellular location">
    <subcellularLocation>
        <location evidence="1">Cytoplasm</location>
    </subcellularLocation>
</comment>
<comment type="similarity">
    <text evidence="1">Belongs to the methylthiotransferase family. MiaB subfamily.</text>
</comment>
<comment type="sequence caution" evidence="3">
    <conflict type="erroneous initiation">
        <sequence resource="EMBL-CDS" id="ACI49872"/>
    </conflict>
</comment>
<organism>
    <name type="scientific">Gluconacetobacter diazotrophicus (strain ATCC 49037 / DSM 5601 / CCUG 37298 / CIP 103539 / LMG 7603 / PAl5)</name>
    <dbReference type="NCBI Taxonomy" id="272568"/>
    <lineage>
        <taxon>Bacteria</taxon>
        <taxon>Pseudomonadati</taxon>
        <taxon>Pseudomonadota</taxon>
        <taxon>Alphaproteobacteria</taxon>
        <taxon>Acetobacterales</taxon>
        <taxon>Acetobacteraceae</taxon>
        <taxon>Gluconacetobacter</taxon>
    </lineage>
</organism>
<name>MIAB_GLUDA</name>
<proteinExistence type="inferred from homology"/>
<gene>
    <name evidence="1" type="primary">miaB</name>
    <name type="ordered locus">GDI1843</name>
    <name type="ordered locus">Gdia_0070</name>
</gene>
<protein>
    <recommendedName>
        <fullName evidence="1">tRNA-2-methylthio-N(6)-dimethylallyladenosine synthase</fullName>
        <ecNumber evidence="1">2.8.4.3</ecNumber>
    </recommendedName>
    <alternativeName>
        <fullName evidence="1">(Dimethylallyl)adenosine tRNA methylthiotransferase MiaB</fullName>
    </alternativeName>
    <alternativeName>
        <fullName evidence="1">tRNA-i(6)A37 methylthiotransferase</fullName>
    </alternativeName>
</protein>
<sequence length="480" mass="52007">MVRRRAQEVSAVTDQPACPPAMDLAPASGSRGLHVITWGCQMNVYDSARMTDVLRPLGYHPVDTPDTADMVILNTCHIRDRAAEKVFSELGRLRLVKEARATEGQQTVLAVAGCVAQAEGKEILARAPFVDIVLGPQTYHRLPEMVARAARAAGAVIDTDFPAEQKFDFLPDAQAPQSPGGITSFLTIQEGCDKFCSFCVVPYTRGAEASRPVASVLREARRMVECGAREITLLGQNVNAYHGEGPDGRVWGLARLAEALAAIPGLARIRYTTSHPRDMDADLIAAHRDLPALMPFLHLPVQSGSDRILDAMNRGHTAADYRDLVLRLRDARPDIALSSDFIVGHPGETDADFEATLQLIRDVGFAQAFSFKYSPRPGTPAAGAPLQVAEDVKDARLQALQALLRTQQDAFNDGTVGHVVPVLFTGHGRKAGQLSGRSPYLQPVHVEGPDSLIGQIANVEIRERYTNSLSGTLVQERAFA</sequence>
<feature type="chain" id="PRO_0000374323" description="tRNA-2-methylthio-N(6)-dimethylallyladenosine synthase">
    <location>
        <begin position="1"/>
        <end position="480"/>
    </location>
</feature>
<feature type="domain" description="MTTase N-terminal" evidence="1">
    <location>
        <begin position="31"/>
        <end position="151"/>
    </location>
</feature>
<feature type="domain" description="Radical SAM core" evidence="2">
    <location>
        <begin position="178"/>
        <end position="410"/>
    </location>
</feature>
<feature type="domain" description="TRAM" evidence="1">
    <location>
        <begin position="413"/>
        <end position="475"/>
    </location>
</feature>
<feature type="binding site" evidence="1">
    <location>
        <position position="40"/>
    </location>
    <ligand>
        <name>[4Fe-4S] cluster</name>
        <dbReference type="ChEBI" id="CHEBI:49883"/>
        <label>1</label>
    </ligand>
</feature>
<feature type="binding site" evidence="1">
    <location>
        <position position="76"/>
    </location>
    <ligand>
        <name>[4Fe-4S] cluster</name>
        <dbReference type="ChEBI" id="CHEBI:49883"/>
        <label>1</label>
    </ligand>
</feature>
<feature type="binding site" evidence="1">
    <location>
        <position position="114"/>
    </location>
    <ligand>
        <name>[4Fe-4S] cluster</name>
        <dbReference type="ChEBI" id="CHEBI:49883"/>
        <label>1</label>
    </ligand>
</feature>
<feature type="binding site" evidence="1">
    <location>
        <position position="192"/>
    </location>
    <ligand>
        <name>[4Fe-4S] cluster</name>
        <dbReference type="ChEBI" id="CHEBI:49883"/>
        <label>2</label>
        <note>4Fe-4S-S-AdoMet</note>
    </ligand>
</feature>
<feature type="binding site" evidence="1">
    <location>
        <position position="196"/>
    </location>
    <ligand>
        <name>[4Fe-4S] cluster</name>
        <dbReference type="ChEBI" id="CHEBI:49883"/>
        <label>2</label>
        <note>4Fe-4S-S-AdoMet</note>
    </ligand>
</feature>
<feature type="binding site" evidence="1">
    <location>
        <position position="199"/>
    </location>
    <ligand>
        <name>[4Fe-4S] cluster</name>
        <dbReference type="ChEBI" id="CHEBI:49883"/>
        <label>2</label>
        <note>4Fe-4S-S-AdoMet</note>
    </ligand>
</feature>